<accession>Q12FG5</accession>
<feature type="chain" id="PRO_0000266915" description="Probable GTP-binding protein EngB">
    <location>
        <begin position="1"/>
        <end position="245"/>
    </location>
</feature>
<feature type="domain" description="EngB-type G" evidence="1">
    <location>
        <begin position="46"/>
        <end position="223"/>
    </location>
</feature>
<feature type="region of interest" description="Disordered" evidence="2">
    <location>
        <begin position="219"/>
        <end position="245"/>
    </location>
</feature>
<feature type="compositionally biased region" description="Basic and acidic residues" evidence="2">
    <location>
        <begin position="222"/>
        <end position="235"/>
    </location>
</feature>
<feature type="compositionally biased region" description="Low complexity" evidence="2">
    <location>
        <begin position="236"/>
        <end position="245"/>
    </location>
</feature>
<feature type="binding site" evidence="1">
    <location>
        <begin position="54"/>
        <end position="61"/>
    </location>
    <ligand>
        <name>GTP</name>
        <dbReference type="ChEBI" id="CHEBI:37565"/>
    </ligand>
</feature>
<feature type="binding site" evidence="1">
    <location>
        <position position="61"/>
    </location>
    <ligand>
        <name>Mg(2+)</name>
        <dbReference type="ChEBI" id="CHEBI:18420"/>
    </ligand>
</feature>
<feature type="binding site" evidence="1">
    <location>
        <begin position="81"/>
        <end position="85"/>
    </location>
    <ligand>
        <name>GTP</name>
        <dbReference type="ChEBI" id="CHEBI:37565"/>
    </ligand>
</feature>
<feature type="binding site" evidence="1">
    <location>
        <position position="83"/>
    </location>
    <ligand>
        <name>Mg(2+)</name>
        <dbReference type="ChEBI" id="CHEBI:18420"/>
    </ligand>
</feature>
<feature type="binding site" evidence="1">
    <location>
        <begin position="103"/>
        <end position="106"/>
    </location>
    <ligand>
        <name>GTP</name>
        <dbReference type="ChEBI" id="CHEBI:37565"/>
    </ligand>
</feature>
<feature type="binding site" evidence="1">
    <location>
        <begin position="173"/>
        <end position="176"/>
    </location>
    <ligand>
        <name>GTP</name>
        <dbReference type="ChEBI" id="CHEBI:37565"/>
    </ligand>
</feature>
<feature type="binding site" evidence="1">
    <location>
        <begin position="202"/>
        <end position="204"/>
    </location>
    <ligand>
        <name>GTP</name>
        <dbReference type="ChEBI" id="CHEBI:37565"/>
    </ligand>
</feature>
<name>ENGB_POLSJ</name>
<dbReference type="EMBL" id="CP000316">
    <property type="protein sequence ID" value="ABE42727.1"/>
    <property type="molecule type" value="Genomic_DNA"/>
</dbReference>
<dbReference type="RefSeq" id="WP_011481730.1">
    <property type="nucleotide sequence ID" value="NC_007948.1"/>
</dbReference>
<dbReference type="SMR" id="Q12FG5"/>
<dbReference type="STRING" id="296591.Bpro_0771"/>
<dbReference type="KEGG" id="pol:Bpro_0771"/>
<dbReference type="eggNOG" id="COG0218">
    <property type="taxonomic scope" value="Bacteria"/>
</dbReference>
<dbReference type="HOGENOM" id="CLU_033732_1_1_4"/>
<dbReference type="OrthoDB" id="9804921at2"/>
<dbReference type="Proteomes" id="UP000001983">
    <property type="component" value="Chromosome"/>
</dbReference>
<dbReference type="GO" id="GO:0005829">
    <property type="term" value="C:cytosol"/>
    <property type="evidence" value="ECO:0007669"/>
    <property type="project" value="TreeGrafter"/>
</dbReference>
<dbReference type="GO" id="GO:0005525">
    <property type="term" value="F:GTP binding"/>
    <property type="evidence" value="ECO:0007669"/>
    <property type="project" value="UniProtKB-UniRule"/>
</dbReference>
<dbReference type="GO" id="GO:0046872">
    <property type="term" value="F:metal ion binding"/>
    <property type="evidence" value="ECO:0007669"/>
    <property type="project" value="UniProtKB-KW"/>
</dbReference>
<dbReference type="GO" id="GO:0000917">
    <property type="term" value="P:division septum assembly"/>
    <property type="evidence" value="ECO:0007669"/>
    <property type="project" value="UniProtKB-KW"/>
</dbReference>
<dbReference type="CDD" id="cd01876">
    <property type="entry name" value="YihA_EngB"/>
    <property type="match status" value="1"/>
</dbReference>
<dbReference type="Gene3D" id="3.40.50.300">
    <property type="entry name" value="P-loop containing nucleotide triphosphate hydrolases"/>
    <property type="match status" value="1"/>
</dbReference>
<dbReference type="HAMAP" id="MF_00321">
    <property type="entry name" value="GTPase_EngB"/>
    <property type="match status" value="1"/>
</dbReference>
<dbReference type="InterPro" id="IPR030393">
    <property type="entry name" value="G_ENGB_dom"/>
</dbReference>
<dbReference type="InterPro" id="IPR006073">
    <property type="entry name" value="GTP-bd"/>
</dbReference>
<dbReference type="InterPro" id="IPR019987">
    <property type="entry name" value="GTP-bd_ribosome_bio_YsxC"/>
</dbReference>
<dbReference type="InterPro" id="IPR027417">
    <property type="entry name" value="P-loop_NTPase"/>
</dbReference>
<dbReference type="NCBIfam" id="TIGR03598">
    <property type="entry name" value="GTPase_YsxC"/>
    <property type="match status" value="1"/>
</dbReference>
<dbReference type="PANTHER" id="PTHR11649:SF13">
    <property type="entry name" value="ENGB-TYPE G DOMAIN-CONTAINING PROTEIN"/>
    <property type="match status" value="1"/>
</dbReference>
<dbReference type="PANTHER" id="PTHR11649">
    <property type="entry name" value="MSS1/TRME-RELATED GTP-BINDING PROTEIN"/>
    <property type="match status" value="1"/>
</dbReference>
<dbReference type="Pfam" id="PF01926">
    <property type="entry name" value="MMR_HSR1"/>
    <property type="match status" value="1"/>
</dbReference>
<dbReference type="SUPFAM" id="SSF52540">
    <property type="entry name" value="P-loop containing nucleoside triphosphate hydrolases"/>
    <property type="match status" value="1"/>
</dbReference>
<dbReference type="PROSITE" id="PS51706">
    <property type="entry name" value="G_ENGB"/>
    <property type="match status" value="1"/>
</dbReference>
<proteinExistence type="inferred from homology"/>
<sequence length="245" mass="26508">MTSSSPARPPVAAASTPSDAKVALGWLHTAKFLTTAPELKHLPRLDVPEIAFVGRSNAGKSTCINTLTQQHRLAFASKTPGRTQSINLFSLGKQGVTDAVLADLPGYGYAAVPKEAKYRWQQVMGNYLQTRDNLKAVVLLCDPRLGLTELDEILLDVLRPRVEEGLKFLVLLTKSDKLNKTEAAKALSIVRLQAGGGDVKLFSSLKRKGVEEVAQHLWDWAHPPEKPAKKPKAEPAAEAATGDEG</sequence>
<reference key="1">
    <citation type="journal article" date="2008" name="Appl. Environ. Microbiol.">
        <title>The genome of Polaromonas sp. strain JS666: insights into the evolution of a hydrocarbon- and xenobiotic-degrading bacterium, and features of relevance to biotechnology.</title>
        <authorList>
            <person name="Mattes T.E."/>
            <person name="Alexander A.K."/>
            <person name="Richardson P.M."/>
            <person name="Munk A.C."/>
            <person name="Han C.S."/>
            <person name="Stothard P."/>
            <person name="Coleman N.V."/>
        </authorList>
    </citation>
    <scope>NUCLEOTIDE SEQUENCE [LARGE SCALE GENOMIC DNA]</scope>
    <source>
        <strain>JS666 / ATCC BAA-500</strain>
    </source>
</reference>
<evidence type="ECO:0000255" key="1">
    <source>
        <dbReference type="HAMAP-Rule" id="MF_00321"/>
    </source>
</evidence>
<evidence type="ECO:0000256" key="2">
    <source>
        <dbReference type="SAM" id="MobiDB-lite"/>
    </source>
</evidence>
<keyword id="KW-0131">Cell cycle</keyword>
<keyword id="KW-0132">Cell division</keyword>
<keyword id="KW-0342">GTP-binding</keyword>
<keyword id="KW-0460">Magnesium</keyword>
<keyword id="KW-0479">Metal-binding</keyword>
<keyword id="KW-0547">Nucleotide-binding</keyword>
<keyword id="KW-1185">Reference proteome</keyword>
<keyword id="KW-0717">Septation</keyword>
<protein>
    <recommendedName>
        <fullName evidence="1">Probable GTP-binding protein EngB</fullName>
    </recommendedName>
</protein>
<organism>
    <name type="scientific">Polaromonas sp. (strain JS666 / ATCC BAA-500)</name>
    <dbReference type="NCBI Taxonomy" id="296591"/>
    <lineage>
        <taxon>Bacteria</taxon>
        <taxon>Pseudomonadati</taxon>
        <taxon>Pseudomonadota</taxon>
        <taxon>Betaproteobacteria</taxon>
        <taxon>Burkholderiales</taxon>
        <taxon>Comamonadaceae</taxon>
        <taxon>Polaromonas</taxon>
    </lineage>
</organism>
<comment type="function">
    <text evidence="1">Necessary for normal cell division and for the maintenance of normal septation.</text>
</comment>
<comment type="cofactor">
    <cofactor evidence="1">
        <name>Mg(2+)</name>
        <dbReference type="ChEBI" id="CHEBI:18420"/>
    </cofactor>
</comment>
<comment type="similarity">
    <text evidence="1">Belongs to the TRAFAC class TrmE-Era-EngA-EngB-Septin-like GTPase superfamily. EngB GTPase family.</text>
</comment>
<gene>
    <name evidence="1" type="primary">engB</name>
    <name type="ordered locus">Bpro_0771</name>
</gene>